<comment type="function">
    <text evidence="3">Component of the cytochrome c oxidase, the last enzyme in the mitochondrial electron transport chain which drives oxidative phosphorylation. The respiratory chain contains 3 multisubunit complexes succinate dehydrogenase (complex II, CII), ubiquinol-cytochrome c oxidoreductase (cytochrome b-c1 complex, complex III, CIII) and cytochrome c oxidase (complex IV, CIV), that cooperate to transfer electrons derived from NADH and succinate to molecular oxygen, creating an electrochemical gradient over the inner membrane that drives transmembrane transport and the ATP synthase. Cytochrome c oxidase is the component of the respiratory chain that catalyzes the reduction of oxygen to water. Electrons originating from reduced cytochrome c in the intermembrane space (IMS) are transferred via the dinuclear copper A center (CU(A)) of subunit 2 and heme A of subunit 1 to the active site in subunit 1, a binuclear center (BNC) formed by heme A3 and copper B (CU(B)). The BNC reduces molecular oxygen to 2 water molecules using 4 electrons from cytochrome c in the IMS and 4 protons from the mitochondrial matrix.</text>
</comment>
<comment type="catalytic activity">
    <reaction evidence="3">
        <text>4 Fe(II)-[cytochrome c] + O2 + 8 H(+)(in) = 4 Fe(III)-[cytochrome c] + 2 H2O + 4 H(+)(out)</text>
        <dbReference type="Rhea" id="RHEA:11436"/>
        <dbReference type="Rhea" id="RHEA-COMP:10350"/>
        <dbReference type="Rhea" id="RHEA-COMP:14399"/>
        <dbReference type="ChEBI" id="CHEBI:15377"/>
        <dbReference type="ChEBI" id="CHEBI:15378"/>
        <dbReference type="ChEBI" id="CHEBI:15379"/>
        <dbReference type="ChEBI" id="CHEBI:29033"/>
        <dbReference type="ChEBI" id="CHEBI:29034"/>
        <dbReference type="EC" id="7.1.1.9"/>
    </reaction>
    <physiologicalReaction direction="left-to-right" evidence="3">
        <dbReference type="Rhea" id="RHEA:11437"/>
    </physiologicalReaction>
</comment>
<comment type="cofactor">
    <cofactor evidence="2">
        <name>heme</name>
        <dbReference type="ChEBI" id="CHEBI:30413"/>
    </cofactor>
    <text evidence="2">Binds 2 heme A groups non-covalently per subunit.</text>
</comment>
<comment type="cofactor">
    <cofactor evidence="2">
        <name>Cu cation</name>
        <dbReference type="ChEBI" id="CHEBI:23378"/>
    </cofactor>
    <text evidence="2">Binds a copper B center.</text>
</comment>
<comment type="pathway">
    <text evidence="3">Energy metabolism; oxidative phosphorylation.</text>
</comment>
<comment type="subunit">
    <text evidence="1 2">Component of the cytochrome c oxidase (complex IV, CIV), a multisubunit enzyme composed of 14 subunits. The complex is composed of a catalytic core of 3 subunits MT-CO1, MT-CO2 and MT-CO3, encoded in the mitochondrial DNA, and 11 supernumerary subunits COX4I, COX5A, COX5B, COX6A, COX6B, COX6C, COX7A, COX7B, COX7C, COX8 and NDUFA4, which are encoded in the nuclear genome. The complex exists as a monomer or a dimer and forms supercomplexes (SCs) in the inner mitochondrial membrane with NADH-ubiquinone oxidoreductase (complex I, CI) and ubiquinol-cytochrome c oxidoreductase (cytochrome b-c1 complex, complex III, CIII), resulting in different assemblies (supercomplex SCI(1)III(2)IV(1) and megacomplex MCI(2)III(2)IV(2)) (By similarity). As a newly synthesized protein, rapidly incorporates into a multi-subunit assembly intermediate in the inner membrane, called MITRAC (mitochondrial translation regulation assembly intermediate of cytochrome c oxidase) complex, whose core components are COA3/MITRAC12 and COX14. Within the MITRAC complex, interacts with COA3 and with SMIM20/MITRAC7; the interaction with SMIM20 stabilizes the newly synthesized MT-CO1 and prevents its premature turnover. Interacts with TMEM177 in a COX20-dependent manner (By similarity).</text>
</comment>
<comment type="subcellular location">
    <subcellularLocation>
        <location evidence="2">Mitochondrion inner membrane</location>
        <topology evidence="2">Multi-pass membrane protein</topology>
    </subcellularLocation>
</comment>
<comment type="similarity">
    <text evidence="4">Belongs to the heme-copper respiratory oxidase family.</text>
</comment>
<feature type="chain" id="PRO_0000253786" description="Cytochrome c oxidase subunit 1">
    <location>
        <begin position="1"/>
        <end position="514"/>
    </location>
</feature>
<feature type="topological domain" description="Mitochondrial matrix" evidence="2">
    <location>
        <begin position="1"/>
        <end position="11"/>
    </location>
</feature>
<feature type="transmembrane region" description="Helical; Name=I" evidence="2">
    <location>
        <begin position="12"/>
        <end position="40"/>
    </location>
</feature>
<feature type="topological domain" description="Mitochondrial intermembrane" evidence="2">
    <location>
        <begin position="41"/>
        <end position="50"/>
    </location>
</feature>
<feature type="transmembrane region" description="Helical; Name=II" evidence="2">
    <location>
        <begin position="51"/>
        <end position="86"/>
    </location>
</feature>
<feature type="topological domain" description="Mitochondrial matrix" evidence="2">
    <location>
        <begin position="87"/>
        <end position="94"/>
    </location>
</feature>
<feature type="transmembrane region" description="Helical; Name=III" evidence="2">
    <location>
        <begin position="95"/>
        <end position="117"/>
    </location>
</feature>
<feature type="topological domain" description="Mitochondrial intermembrane" evidence="2">
    <location>
        <begin position="118"/>
        <end position="140"/>
    </location>
</feature>
<feature type="transmembrane region" description="Helical; Name=IV" evidence="2">
    <location>
        <begin position="141"/>
        <end position="170"/>
    </location>
</feature>
<feature type="topological domain" description="Mitochondrial matrix" evidence="2">
    <location>
        <begin position="171"/>
        <end position="182"/>
    </location>
</feature>
<feature type="transmembrane region" description="Helical; Name=V" evidence="2">
    <location>
        <begin position="183"/>
        <end position="212"/>
    </location>
</feature>
<feature type="topological domain" description="Mitochondrial intermembrane" evidence="2">
    <location>
        <begin position="213"/>
        <end position="227"/>
    </location>
</feature>
<feature type="transmembrane region" description="Helical; Name=VI" evidence="2">
    <location>
        <begin position="228"/>
        <end position="261"/>
    </location>
</feature>
<feature type="topological domain" description="Mitochondrial matrix" evidence="2">
    <location>
        <begin position="262"/>
        <end position="269"/>
    </location>
</feature>
<feature type="transmembrane region" description="Helical; Name=VII" evidence="2">
    <location>
        <begin position="270"/>
        <end position="286"/>
    </location>
</feature>
<feature type="topological domain" description="Mitochondrial intermembrane" evidence="2">
    <location>
        <begin position="287"/>
        <end position="298"/>
    </location>
</feature>
<feature type="transmembrane region" description="Helical; Name=VIII" evidence="2">
    <location>
        <begin position="299"/>
        <end position="327"/>
    </location>
</feature>
<feature type="topological domain" description="Mitochondrial matrix" evidence="2">
    <location>
        <begin position="328"/>
        <end position="335"/>
    </location>
</feature>
<feature type="transmembrane region" description="Helical; Name=IX" evidence="2">
    <location>
        <begin position="336"/>
        <end position="357"/>
    </location>
</feature>
<feature type="topological domain" description="Mitochondrial intermembrane" evidence="2">
    <location>
        <begin position="358"/>
        <end position="370"/>
    </location>
</feature>
<feature type="transmembrane region" description="Helical; Name=X" evidence="2">
    <location>
        <begin position="371"/>
        <end position="400"/>
    </location>
</feature>
<feature type="topological domain" description="Mitochondrial matrix" evidence="2">
    <location>
        <begin position="401"/>
        <end position="406"/>
    </location>
</feature>
<feature type="transmembrane region" description="Helical; Name=XI" evidence="2">
    <location>
        <begin position="407"/>
        <end position="433"/>
    </location>
</feature>
<feature type="topological domain" description="Mitochondrial intermembrane" evidence="2">
    <location>
        <begin position="434"/>
        <end position="446"/>
    </location>
</feature>
<feature type="transmembrane region" description="Helical; Name=XII" evidence="2">
    <location>
        <begin position="447"/>
        <end position="478"/>
    </location>
</feature>
<feature type="topological domain" description="Mitochondrial matrix" evidence="2">
    <location>
        <begin position="479"/>
        <end position="514"/>
    </location>
</feature>
<feature type="binding site" evidence="2">
    <location>
        <position position="40"/>
    </location>
    <ligand>
        <name>Na(+)</name>
        <dbReference type="ChEBI" id="CHEBI:29101"/>
    </ligand>
</feature>
<feature type="binding site" evidence="2">
    <location>
        <position position="45"/>
    </location>
    <ligand>
        <name>Na(+)</name>
        <dbReference type="ChEBI" id="CHEBI:29101"/>
    </ligand>
</feature>
<feature type="binding site" description="axial binding residue" evidence="2">
    <location>
        <position position="61"/>
    </location>
    <ligand>
        <name>Fe(II)-heme a</name>
        <dbReference type="ChEBI" id="CHEBI:61715"/>
        <note>low-spin</note>
    </ligand>
    <ligandPart>
        <name>Fe</name>
        <dbReference type="ChEBI" id="CHEBI:18248"/>
    </ligandPart>
</feature>
<feature type="binding site" evidence="2">
    <location>
        <position position="240"/>
    </location>
    <ligand>
        <name>Cu cation</name>
        <dbReference type="ChEBI" id="CHEBI:23378"/>
        <label>B</label>
    </ligand>
</feature>
<feature type="binding site" evidence="2">
    <location>
        <position position="244"/>
    </location>
    <ligand>
        <name>O2</name>
        <dbReference type="ChEBI" id="CHEBI:15379"/>
    </ligand>
</feature>
<feature type="binding site" evidence="2">
    <location>
        <position position="290"/>
    </location>
    <ligand>
        <name>Cu cation</name>
        <dbReference type="ChEBI" id="CHEBI:23378"/>
        <label>B</label>
    </ligand>
</feature>
<feature type="binding site" evidence="2">
    <location>
        <position position="291"/>
    </location>
    <ligand>
        <name>Cu cation</name>
        <dbReference type="ChEBI" id="CHEBI:23378"/>
        <label>B</label>
    </ligand>
</feature>
<feature type="binding site" evidence="2">
    <location>
        <position position="368"/>
    </location>
    <ligand>
        <name>Mg(2+)</name>
        <dbReference type="ChEBI" id="CHEBI:18420"/>
        <note>ligand shared with MT-CO2</note>
    </ligand>
</feature>
<feature type="binding site" evidence="2">
    <location>
        <position position="369"/>
    </location>
    <ligand>
        <name>Mg(2+)</name>
        <dbReference type="ChEBI" id="CHEBI:18420"/>
        <note>ligand shared with MT-CO2</note>
    </ligand>
</feature>
<feature type="binding site" description="axial binding residue" evidence="2">
    <location>
        <position position="376"/>
    </location>
    <ligand>
        <name>heme a3</name>
        <dbReference type="ChEBI" id="CHEBI:83282"/>
        <note>high-spin</note>
    </ligand>
    <ligandPart>
        <name>Fe</name>
        <dbReference type="ChEBI" id="CHEBI:18248"/>
    </ligandPart>
</feature>
<feature type="binding site" description="axial binding residue" evidence="2">
    <location>
        <position position="378"/>
    </location>
    <ligand>
        <name>Fe(II)-heme a</name>
        <dbReference type="ChEBI" id="CHEBI:61715"/>
        <note>low-spin</note>
    </ligand>
    <ligandPart>
        <name>Fe</name>
        <dbReference type="ChEBI" id="CHEBI:18248"/>
    </ligandPart>
</feature>
<feature type="binding site" evidence="2">
    <location>
        <position position="441"/>
    </location>
    <ligand>
        <name>Na(+)</name>
        <dbReference type="ChEBI" id="CHEBI:29101"/>
    </ligand>
</feature>
<feature type="cross-link" description="1'-histidyl-3'-tyrosine (His-Tyr)" evidence="2">
    <location>
        <begin position="240"/>
        <end position="244"/>
    </location>
</feature>
<keyword id="KW-0106">Calcium</keyword>
<keyword id="KW-0186">Copper</keyword>
<keyword id="KW-0249">Electron transport</keyword>
<keyword id="KW-0349">Heme</keyword>
<keyword id="KW-0408">Iron</keyword>
<keyword id="KW-0460">Magnesium</keyword>
<keyword id="KW-0472">Membrane</keyword>
<keyword id="KW-0479">Metal-binding</keyword>
<keyword id="KW-0496">Mitochondrion</keyword>
<keyword id="KW-0999">Mitochondrion inner membrane</keyword>
<keyword id="KW-1185">Reference proteome</keyword>
<keyword id="KW-0679">Respiratory chain</keyword>
<keyword id="KW-0915">Sodium</keyword>
<keyword id="KW-1278">Translocase</keyword>
<keyword id="KW-0812">Transmembrane</keyword>
<keyword id="KW-1133">Transmembrane helix</keyword>
<keyword id="KW-0813">Transport</keyword>
<protein>
    <recommendedName>
        <fullName>Cytochrome c oxidase subunit 1</fullName>
        <ecNumber>7.1.1.9</ecNumber>
    </recommendedName>
    <alternativeName>
        <fullName>Cytochrome c oxidase polypeptide I</fullName>
    </alternativeName>
</protein>
<evidence type="ECO:0000250" key="1">
    <source>
        <dbReference type="UniProtKB" id="P00395"/>
    </source>
</evidence>
<evidence type="ECO:0000250" key="2">
    <source>
        <dbReference type="UniProtKB" id="P00396"/>
    </source>
</evidence>
<evidence type="ECO:0000250" key="3">
    <source>
        <dbReference type="UniProtKB" id="P00401"/>
    </source>
</evidence>
<evidence type="ECO:0000305" key="4"/>
<organism>
    <name type="scientific">Bos mutus grunniens</name>
    <name type="common">Wild yak</name>
    <name type="synonym">Bos grunniens</name>
    <dbReference type="NCBI Taxonomy" id="30521"/>
    <lineage>
        <taxon>Eukaryota</taxon>
        <taxon>Metazoa</taxon>
        <taxon>Chordata</taxon>
        <taxon>Craniata</taxon>
        <taxon>Vertebrata</taxon>
        <taxon>Euteleostomi</taxon>
        <taxon>Mammalia</taxon>
        <taxon>Eutheria</taxon>
        <taxon>Laurasiatheria</taxon>
        <taxon>Artiodactyla</taxon>
        <taxon>Ruminantia</taxon>
        <taxon>Pecora</taxon>
        <taxon>Bovidae</taxon>
        <taxon>Bovinae</taxon>
        <taxon>Bos</taxon>
    </lineage>
</organism>
<proteinExistence type="inferred from homology"/>
<name>COX1_BOSMU</name>
<accession>Q5Y4Q8</accession>
<reference key="1">
    <citation type="submission" date="2004-10" db="EMBL/GenBank/DDBJ databases">
        <title>Complete sequence of the Yak (Bos grunniens.) mitochondrial genome and its genetic relationship with related species.</title>
        <authorList>
            <person name="Gu Z."/>
            <person name="Zhao X."/>
            <person name="Li N."/>
            <person name="Wu C."/>
        </authorList>
    </citation>
    <scope>NUCLEOTIDE SEQUENCE [GENOMIC DNA]</scope>
</reference>
<sequence>MFINRWLFSTNHKDIGTLYLLFGAWAGMVGTALSLLIRAELGQPGTLLGDDQIYNVVVTAHAFVMIFFMVMPIMIGGFGNWLVPLMIGAPDMAFPRMNNMSFWLLPPSFLLLLASSMVEAGAGTGWTVYPPLAGNLAHAGASVDLTIFSLHLAGVSSILGAINFITTIINMKPPAMSQYQTPLFVWSVMITAVLLLLSLPVLAAGITMLLTDRNLNTTFFDPAGGGDPILYQHLFWFFGHPEVYILILPGFGMISHIVTYYSGKKEPFGYMGMVWAMMSIGFLGFIVWAHHMFTVGMDVDTRAYFTSATMIIAIPTGVKVFSWLATLHGGNIKWSPAMMWALGFIFLFTVGGLTGIVLANSSLDIVLHDTYYVVAHFHYVLSMGAVFAIMGGFVHWFPLFSGYTLNDTWAKIHFAIMFVGVNMTFFPQHFLGLSGMPRRSPDYPDAYTMWNTVSSMGSFISLTAVMLMVFIIWEALASKREVLTVDLTTTNLEWLNGCPPPYHTFEEPTYVNLK</sequence>
<geneLocation type="mitochondrion"/>
<gene>
    <name type="primary">MT-CO1</name>
    <name type="synonym">COI</name>
    <name type="synonym">COXI</name>
    <name type="synonym">MTCO1</name>
</gene>
<dbReference type="EC" id="7.1.1.9"/>
<dbReference type="EMBL" id="AY684273">
    <property type="protein sequence ID" value="AAU89108.1"/>
    <property type="molecule type" value="Genomic_DNA"/>
</dbReference>
<dbReference type="SMR" id="Q5Y4Q8"/>
<dbReference type="UniPathway" id="UPA00705"/>
<dbReference type="Proteomes" id="UP000694520">
    <property type="component" value="Unplaced"/>
</dbReference>
<dbReference type="GO" id="GO:0005743">
    <property type="term" value="C:mitochondrial inner membrane"/>
    <property type="evidence" value="ECO:0007669"/>
    <property type="project" value="UniProtKB-SubCell"/>
</dbReference>
<dbReference type="GO" id="GO:0045277">
    <property type="term" value="C:respiratory chain complex IV"/>
    <property type="evidence" value="ECO:0000250"/>
    <property type="project" value="UniProtKB"/>
</dbReference>
<dbReference type="GO" id="GO:0004129">
    <property type="term" value="F:cytochrome-c oxidase activity"/>
    <property type="evidence" value="ECO:0007669"/>
    <property type="project" value="UniProtKB-EC"/>
</dbReference>
<dbReference type="GO" id="GO:0020037">
    <property type="term" value="F:heme binding"/>
    <property type="evidence" value="ECO:0007669"/>
    <property type="project" value="InterPro"/>
</dbReference>
<dbReference type="GO" id="GO:0046872">
    <property type="term" value="F:metal ion binding"/>
    <property type="evidence" value="ECO:0007669"/>
    <property type="project" value="UniProtKB-KW"/>
</dbReference>
<dbReference type="GO" id="GO:0015990">
    <property type="term" value="P:electron transport coupled proton transport"/>
    <property type="evidence" value="ECO:0007669"/>
    <property type="project" value="TreeGrafter"/>
</dbReference>
<dbReference type="GO" id="GO:0006123">
    <property type="term" value="P:mitochondrial electron transport, cytochrome c to oxygen"/>
    <property type="evidence" value="ECO:0007669"/>
    <property type="project" value="TreeGrafter"/>
</dbReference>
<dbReference type="CDD" id="cd01663">
    <property type="entry name" value="Cyt_c_Oxidase_I"/>
    <property type="match status" value="1"/>
</dbReference>
<dbReference type="FunFam" id="1.20.210.10:FF:000001">
    <property type="entry name" value="Cytochrome c oxidase subunit 1"/>
    <property type="match status" value="1"/>
</dbReference>
<dbReference type="Gene3D" id="1.20.210.10">
    <property type="entry name" value="Cytochrome c oxidase-like, subunit I domain"/>
    <property type="match status" value="1"/>
</dbReference>
<dbReference type="InterPro" id="IPR023616">
    <property type="entry name" value="Cyt_c_oxase-like_su1_dom"/>
</dbReference>
<dbReference type="InterPro" id="IPR036927">
    <property type="entry name" value="Cyt_c_oxase-like_su1_sf"/>
</dbReference>
<dbReference type="InterPro" id="IPR000883">
    <property type="entry name" value="Cyt_C_Oxase_1"/>
</dbReference>
<dbReference type="InterPro" id="IPR023615">
    <property type="entry name" value="Cyt_c_Oxase_su1_BS"/>
</dbReference>
<dbReference type="InterPro" id="IPR033944">
    <property type="entry name" value="Cyt_c_oxase_su1_dom"/>
</dbReference>
<dbReference type="PANTHER" id="PTHR10422">
    <property type="entry name" value="CYTOCHROME C OXIDASE SUBUNIT 1"/>
    <property type="match status" value="1"/>
</dbReference>
<dbReference type="PANTHER" id="PTHR10422:SF18">
    <property type="entry name" value="CYTOCHROME C OXIDASE SUBUNIT 1"/>
    <property type="match status" value="1"/>
</dbReference>
<dbReference type="Pfam" id="PF00115">
    <property type="entry name" value="COX1"/>
    <property type="match status" value="1"/>
</dbReference>
<dbReference type="PRINTS" id="PR01165">
    <property type="entry name" value="CYCOXIDASEI"/>
</dbReference>
<dbReference type="SUPFAM" id="SSF81442">
    <property type="entry name" value="Cytochrome c oxidase subunit I-like"/>
    <property type="match status" value="1"/>
</dbReference>
<dbReference type="PROSITE" id="PS50855">
    <property type="entry name" value="COX1"/>
    <property type="match status" value="1"/>
</dbReference>
<dbReference type="PROSITE" id="PS00077">
    <property type="entry name" value="COX1_CUB"/>
    <property type="match status" value="1"/>
</dbReference>